<accession>P29159</accession>
<proteinExistence type="inferred from homology"/>
<name>RS7_THECE</name>
<gene>
    <name evidence="1" type="primary">rps7</name>
</gene>
<sequence length="215" mass="24393">MAKTLTERFYQPKELKVMGRWSVEDVTVNDPSLRPYINLEARLLPHSHGRHAKKAFGKANVHIVERLINKVMRSGATSHKAGGHFMRRDDRSLMSKKMKAYEVVKEAFMIIERRTKQNPIQVLVRAIENSAPREDTTTIAFGGIRYHMAVDVSPLRRLDIALKNIALGASAKCYRNKTSYAQALAEEIIAAANADPKTFAYSRKEEIERIAQSSR</sequence>
<comment type="function">
    <text evidence="1">One of the primary rRNA binding proteins, it binds directly to 16S rRNA where it nucleates assembly of the head domain of the 30S subunit. Is located at the subunit interface close to the decoding center.</text>
</comment>
<comment type="subunit">
    <text>Part of the 30S ribosomal subunit.</text>
</comment>
<comment type="similarity">
    <text evidence="1">Belongs to the universal ribosomal protein uS7 family.</text>
</comment>
<feature type="chain" id="PRO_0000124416" description="Small ribosomal subunit protein uS7">
    <location>
        <begin position="1"/>
        <end position="215"/>
    </location>
</feature>
<feature type="sequence conflict" description="In Ref. 2; CAA47728." evidence="2" ref="2">
    <original>T</original>
    <variation>S</variation>
    <location>
        <position position="198"/>
    </location>
</feature>
<feature type="sequence conflict" description="In Ref. 2; CAA47728." evidence="2" ref="2">
    <original>SR</original>
    <variation>RA</variation>
    <location>
        <begin position="214"/>
        <end position="215"/>
    </location>
</feature>
<evidence type="ECO:0000255" key="1">
    <source>
        <dbReference type="HAMAP-Rule" id="MF_00480"/>
    </source>
</evidence>
<evidence type="ECO:0000305" key="2"/>
<organism>
    <name type="scientific">Thermococcus celer</name>
    <dbReference type="NCBI Taxonomy" id="2264"/>
    <lineage>
        <taxon>Archaea</taxon>
        <taxon>Methanobacteriati</taxon>
        <taxon>Methanobacteriota</taxon>
        <taxon>Thermococci</taxon>
        <taxon>Thermococcales</taxon>
        <taxon>Thermococcaceae</taxon>
        <taxon>Thermococcus</taxon>
    </lineage>
</organism>
<reference key="1">
    <citation type="journal article" date="1991" name="Nucleic Acids Res.">
        <title>Nucleotide sequence of the genes encoding the L30, S12 and S7 equivalent ribosomal proteins from the archaeum Thermococcus celer.</title>
        <authorList>
            <person name="Klenk H.-P."/>
            <person name="Schwass V."/>
            <person name="Zillig W."/>
        </authorList>
    </citation>
    <scope>NUCLEOTIDE SEQUENCE [GENOMIC DNA]</scope>
    <source>
        <strain>ATCC 35543 / DSM 2476 / JCM 8558 / Vu 13</strain>
    </source>
</reference>
<reference key="2">
    <citation type="journal article" date="1992" name="Nucleic Acids Res.">
        <title>Nucleotide sequence of the genes encoding the three largest subunits of the DNA-dependent RNA polymerase from the archaeum Thermococcus celer.</title>
        <authorList>
            <person name="Klenk H.-P."/>
            <person name="Schwass V."/>
            <person name="Lottspeich F."/>
            <person name="Zillig W."/>
        </authorList>
    </citation>
    <scope>NUCLEOTIDE SEQUENCE [GENOMIC DNA]</scope>
    <source>
        <strain>ATCC 35543 / DSM 2476 / JCM 8558 / Vu 13</strain>
    </source>
</reference>
<reference key="3">
    <citation type="journal article" date="1993" name="Biochim. Biophys. Acta">
        <title>Nucleotide sequence of the genes encoding proline tRNA(UGG) and threonine tRNA(GGU) and consensus promoter model of Thermococcus celer.</title>
        <authorList>
            <person name="Klenk H.-P."/>
            <person name="Schwass V."/>
            <person name="Zillig W."/>
        </authorList>
    </citation>
    <scope>NUCLEOTIDE SEQUENCE [GENOMIC DNA] OF 196-215</scope>
    <source>
        <strain>ATCC 35543 / DSM 2476 / JCM 8558 / Vu 13</strain>
    </source>
</reference>
<dbReference type="EMBL" id="X60305">
    <property type="protein sequence ID" value="CAA42850.1"/>
    <property type="molecule type" value="Genomic_DNA"/>
</dbReference>
<dbReference type="EMBL" id="X67313">
    <property type="protein sequence ID" value="CAA47728.1"/>
    <property type="molecule type" value="Genomic_DNA"/>
</dbReference>
<dbReference type="EMBL" id="X68397">
    <property type="protein sequence ID" value="CAA48463.1"/>
    <property type="molecule type" value="Genomic_DNA"/>
</dbReference>
<dbReference type="PIR" id="S18714">
    <property type="entry name" value="S18714"/>
</dbReference>
<dbReference type="SMR" id="P29159"/>
<dbReference type="GO" id="GO:0015935">
    <property type="term" value="C:small ribosomal subunit"/>
    <property type="evidence" value="ECO:0007669"/>
    <property type="project" value="InterPro"/>
</dbReference>
<dbReference type="GO" id="GO:0019843">
    <property type="term" value="F:rRNA binding"/>
    <property type="evidence" value="ECO:0007669"/>
    <property type="project" value="UniProtKB-UniRule"/>
</dbReference>
<dbReference type="GO" id="GO:0003735">
    <property type="term" value="F:structural constituent of ribosome"/>
    <property type="evidence" value="ECO:0007669"/>
    <property type="project" value="InterPro"/>
</dbReference>
<dbReference type="GO" id="GO:0006412">
    <property type="term" value="P:translation"/>
    <property type="evidence" value="ECO:0007669"/>
    <property type="project" value="UniProtKB-UniRule"/>
</dbReference>
<dbReference type="Gene3D" id="1.10.455.10">
    <property type="entry name" value="Ribosomal protein S7 domain"/>
    <property type="match status" value="1"/>
</dbReference>
<dbReference type="HAMAP" id="MF_00480_A">
    <property type="entry name" value="Ribosomal_uS7_A"/>
    <property type="match status" value="1"/>
</dbReference>
<dbReference type="InterPro" id="IPR000235">
    <property type="entry name" value="Ribosomal_uS7"/>
</dbReference>
<dbReference type="InterPro" id="IPR026018">
    <property type="entry name" value="Ribosomal_uS7_arc"/>
</dbReference>
<dbReference type="InterPro" id="IPR023798">
    <property type="entry name" value="Ribosomal_uS7_dom"/>
</dbReference>
<dbReference type="InterPro" id="IPR036823">
    <property type="entry name" value="Ribosomal_uS7_dom_sf"/>
</dbReference>
<dbReference type="InterPro" id="IPR005716">
    <property type="entry name" value="Ribosomal_uS7_euk/arc"/>
</dbReference>
<dbReference type="NCBIfam" id="NF003106">
    <property type="entry name" value="PRK04027.1"/>
    <property type="match status" value="1"/>
</dbReference>
<dbReference type="NCBIfam" id="TIGR01028">
    <property type="entry name" value="uS7_euk_arch"/>
    <property type="match status" value="1"/>
</dbReference>
<dbReference type="PANTHER" id="PTHR11205">
    <property type="entry name" value="RIBOSOMAL PROTEIN S7"/>
    <property type="match status" value="1"/>
</dbReference>
<dbReference type="Pfam" id="PF00177">
    <property type="entry name" value="Ribosomal_S7"/>
    <property type="match status" value="1"/>
</dbReference>
<dbReference type="PIRSF" id="PIRSF002122">
    <property type="entry name" value="RPS7p_RPS7a_RPS5e_RPS7o"/>
    <property type="match status" value="1"/>
</dbReference>
<dbReference type="SUPFAM" id="SSF47973">
    <property type="entry name" value="Ribosomal protein S7"/>
    <property type="match status" value="1"/>
</dbReference>
<protein>
    <recommendedName>
        <fullName evidence="1">Small ribosomal subunit protein uS7</fullName>
    </recommendedName>
    <alternativeName>
        <fullName evidence="2">30S ribosomal protein S7</fullName>
    </alternativeName>
</protein>
<keyword id="KW-0687">Ribonucleoprotein</keyword>
<keyword id="KW-0689">Ribosomal protein</keyword>
<keyword id="KW-0694">RNA-binding</keyword>
<keyword id="KW-0699">rRNA-binding</keyword>